<gene>
    <name type="primary">nbl1</name>
</gene>
<organism>
    <name type="scientific">Xenopus tropicalis</name>
    <name type="common">Western clawed frog</name>
    <name type="synonym">Silurana tropicalis</name>
    <dbReference type="NCBI Taxonomy" id="8364"/>
    <lineage>
        <taxon>Eukaryota</taxon>
        <taxon>Metazoa</taxon>
        <taxon>Chordata</taxon>
        <taxon>Craniata</taxon>
        <taxon>Vertebrata</taxon>
        <taxon>Euteleostomi</taxon>
        <taxon>Amphibia</taxon>
        <taxon>Batrachia</taxon>
        <taxon>Anura</taxon>
        <taxon>Pipoidea</taxon>
        <taxon>Pipidae</taxon>
        <taxon>Xenopodinae</taxon>
        <taxon>Xenopus</taxon>
        <taxon>Silurana</taxon>
    </lineage>
</organism>
<comment type="function">
    <text evidence="1">May act as a tumor suppressor. Cytokine that has an axial patterning activity. Acts like bone morpho-genetic protein (BMP) antagonist in embryonic explants. Blocks the bmp2 activity (By similarity).</text>
</comment>
<comment type="subunit">
    <text evidence="1">Interacts with bmp2; the interaction is blocked in presence of nog.</text>
</comment>
<comment type="subcellular location">
    <subcellularLocation>
        <location evidence="1">Secreted</location>
    </subcellularLocation>
</comment>
<comment type="similarity">
    <text evidence="4">Belongs to the DAN family.</text>
</comment>
<proteinExistence type="evidence at transcript level"/>
<evidence type="ECO:0000250" key="1"/>
<evidence type="ECO:0000255" key="2"/>
<evidence type="ECO:0000256" key="3">
    <source>
        <dbReference type="SAM" id="MobiDB-lite"/>
    </source>
</evidence>
<evidence type="ECO:0000305" key="4"/>
<reference key="1">
    <citation type="submission" date="2004-07" db="EMBL/GenBank/DDBJ databases">
        <authorList>
            <consortium name="NIH - Xenopus Gene Collection (XGC) project"/>
        </authorList>
    </citation>
    <scope>NUCLEOTIDE SEQUENCE [LARGE SCALE MRNA]</scope>
</reference>
<protein>
    <recommendedName>
        <fullName>Neuroblastoma suppressor of tumorigenicity 1</fullName>
    </recommendedName>
</protein>
<sequence>MTVWLLIGFLLPVAIFAAPPINRLALFPDKSAWCEAKNITQIVGHSGCESKSIQNRACLGQCFSYSVPNTFPQSTESLVHCDSCMPIDSVWDVVTLECPGNEEFPRVDKLVEKILQCSCQACGKELSQEGAMFNVYLNTAEETLSPAETLGHHHHRPPAREEDSPAQSQREGESEE</sequence>
<accession>Q6DF53</accession>
<keyword id="KW-0202">Cytokine</keyword>
<keyword id="KW-1015">Disulfide bond</keyword>
<keyword id="KW-1185">Reference proteome</keyword>
<keyword id="KW-0964">Secreted</keyword>
<keyword id="KW-0732">Signal</keyword>
<keyword id="KW-0043">Tumor suppressor</keyword>
<dbReference type="EMBL" id="BC076890">
    <property type="protein sequence ID" value="AAH76890.1"/>
    <property type="molecule type" value="mRNA"/>
</dbReference>
<dbReference type="RefSeq" id="NP_001006826.1">
    <property type="nucleotide sequence ID" value="NM_001006825.1"/>
</dbReference>
<dbReference type="SMR" id="Q6DF53"/>
<dbReference type="FunCoup" id="Q6DF53">
    <property type="interactions" value="266"/>
</dbReference>
<dbReference type="STRING" id="8364.ENSXETP00000017312"/>
<dbReference type="PaxDb" id="8364-ENSXETP00000038222"/>
<dbReference type="DNASU" id="448558"/>
<dbReference type="GeneID" id="448558"/>
<dbReference type="KEGG" id="xtr:448558"/>
<dbReference type="AGR" id="Xenbase:XB-GENE-479181"/>
<dbReference type="CTD" id="4681"/>
<dbReference type="Xenbase" id="XB-GENE-479181">
    <property type="gene designation" value="nbl1"/>
</dbReference>
<dbReference type="eggNOG" id="ENOG502RYP0">
    <property type="taxonomic scope" value="Eukaryota"/>
</dbReference>
<dbReference type="HOGENOM" id="CLU_115450_0_0_1"/>
<dbReference type="InParanoid" id="Q6DF53"/>
<dbReference type="OMA" id="HKHTEPH"/>
<dbReference type="OrthoDB" id="8196271at2759"/>
<dbReference type="PhylomeDB" id="Q6DF53"/>
<dbReference type="TreeFam" id="TF106445"/>
<dbReference type="Proteomes" id="UP000008143">
    <property type="component" value="Chromosome 7"/>
</dbReference>
<dbReference type="GO" id="GO:0005615">
    <property type="term" value="C:extracellular space"/>
    <property type="evidence" value="ECO:0007669"/>
    <property type="project" value="UniProtKB-KW"/>
</dbReference>
<dbReference type="GO" id="GO:0005125">
    <property type="term" value="F:cytokine activity"/>
    <property type="evidence" value="ECO:0007669"/>
    <property type="project" value="UniProtKB-KW"/>
</dbReference>
<dbReference type="FunFam" id="2.10.90.10:FF:000016">
    <property type="entry name" value="Neuroblastoma suppressor of tumorigenicity 1"/>
    <property type="match status" value="1"/>
</dbReference>
<dbReference type="Gene3D" id="2.10.90.10">
    <property type="entry name" value="Cystine-knot cytokines"/>
    <property type="match status" value="1"/>
</dbReference>
<dbReference type="InterPro" id="IPR006207">
    <property type="entry name" value="Cys_knot_C"/>
</dbReference>
<dbReference type="InterPro" id="IPR029034">
    <property type="entry name" value="Cystine-knot_cytokine"/>
</dbReference>
<dbReference type="InterPro" id="IPR004133">
    <property type="entry name" value="DAN"/>
</dbReference>
<dbReference type="InterPro" id="IPR016728">
    <property type="entry name" value="Neuroblast_suppress_tumour_1"/>
</dbReference>
<dbReference type="PANTHER" id="PTHR15283">
    <property type="entry name" value="GREMLIN 1"/>
    <property type="match status" value="1"/>
</dbReference>
<dbReference type="PANTHER" id="PTHR15283:SF5">
    <property type="entry name" value="NEUROBLASTOMA SUPPRESSOR OF TUMORIGENICITY 1"/>
    <property type="match status" value="1"/>
</dbReference>
<dbReference type="Pfam" id="PF03045">
    <property type="entry name" value="DAN"/>
    <property type="match status" value="1"/>
</dbReference>
<dbReference type="PIRSF" id="PIRSF018557">
    <property type="entry name" value="DAN_sub"/>
    <property type="match status" value="1"/>
</dbReference>
<dbReference type="SMART" id="SM00041">
    <property type="entry name" value="CT"/>
    <property type="match status" value="1"/>
</dbReference>
<name>NBL1_XENTR</name>
<feature type="signal peptide" evidence="2">
    <location>
        <begin position="1"/>
        <end position="17"/>
    </location>
</feature>
<feature type="chain" id="PRO_0000364340" description="Neuroblastoma suppressor of tumorigenicity 1">
    <location>
        <begin position="18"/>
        <end position="176"/>
    </location>
</feature>
<feature type="domain" description="CTCK">
    <location>
        <begin position="34"/>
        <end position="123"/>
    </location>
</feature>
<feature type="region of interest" description="Disordered" evidence="3">
    <location>
        <begin position="148"/>
        <end position="176"/>
    </location>
</feature>
<feature type="disulfide bond" evidence="1">
    <location>
        <begin position="34"/>
        <end position="84"/>
    </location>
</feature>
<feature type="disulfide bond" evidence="1">
    <location>
        <begin position="48"/>
        <end position="98"/>
    </location>
</feature>
<feature type="disulfide bond" evidence="1">
    <location>
        <begin position="58"/>
        <end position="117"/>
    </location>
</feature>
<feature type="disulfide bond" evidence="1">
    <location>
        <begin position="62"/>
        <end position="119"/>
    </location>
</feature>
<feature type="disulfide bond" evidence="1">
    <location>
        <begin position="81"/>
        <end position="122"/>
    </location>
</feature>